<organism>
    <name type="scientific">Opitutus terrae (strain DSM 11246 / JCM 15787 / PB90-1)</name>
    <dbReference type="NCBI Taxonomy" id="452637"/>
    <lineage>
        <taxon>Bacteria</taxon>
        <taxon>Pseudomonadati</taxon>
        <taxon>Verrucomicrobiota</taxon>
        <taxon>Opitutia</taxon>
        <taxon>Opitutales</taxon>
        <taxon>Opitutaceae</taxon>
        <taxon>Opitutus</taxon>
    </lineage>
</organism>
<keyword id="KW-1185">Reference proteome</keyword>
<keyword id="KW-0687">Ribonucleoprotein</keyword>
<keyword id="KW-0689">Ribosomal protein</keyword>
<comment type="function">
    <text evidence="1">This protein is one of the early assembly proteins of the 50S ribosomal subunit, although it is not seen to bind rRNA by itself. It is important during the early stages of 50S assembly.</text>
</comment>
<comment type="subunit">
    <text evidence="1">Part of the 50S ribosomal subunit.</text>
</comment>
<comment type="similarity">
    <text evidence="1">Belongs to the universal ribosomal protein uL13 family.</text>
</comment>
<feature type="chain" id="PRO_1000144160" description="Large ribosomal subunit protein uL13">
    <location>
        <begin position="1"/>
        <end position="142"/>
    </location>
</feature>
<protein>
    <recommendedName>
        <fullName evidence="1">Large ribosomal subunit protein uL13</fullName>
    </recommendedName>
    <alternativeName>
        <fullName evidence="2">50S ribosomal protein L13</fullName>
    </alternativeName>
</protein>
<proteinExistence type="inferred from homology"/>
<name>RL13_OPITP</name>
<dbReference type="EMBL" id="CP001032">
    <property type="protein sequence ID" value="ACB73986.1"/>
    <property type="molecule type" value="Genomic_DNA"/>
</dbReference>
<dbReference type="RefSeq" id="WP_012373524.1">
    <property type="nucleotide sequence ID" value="NC_010571.1"/>
</dbReference>
<dbReference type="SMR" id="B1ZUE3"/>
<dbReference type="STRING" id="452637.Oter_0697"/>
<dbReference type="KEGG" id="ote:Oter_0697"/>
<dbReference type="eggNOG" id="COG0102">
    <property type="taxonomic scope" value="Bacteria"/>
</dbReference>
<dbReference type="HOGENOM" id="CLU_082184_2_2_0"/>
<dbReference type="OrthoDB" id="9801330at2"/>
<dbReference type="Proteomes" id="UP000007013">
    <property type="component" value="Chromosome"/>
</dbReference>
<dbReference type="GO" id="GO:0022625">
    <property type="term" value="C:cytosolic large ribosomal subunit"/>
    <property type="evidence" value="ECO:0007669"/>
    <property type="project" value="TreeGrafter"/>
</dbReference>
<dbReference type="GO" id="GO:0003729">
    <property type="term" value="F:mRNA binding"/>
    <property type="evidence" value="ECO:0007669"/>
    <property type="project" value="TreeGrafter"/>
</dbReference>
<dbReference type="GO" id="GO:0003735">
    <property type="term" value="F:structural constituent of ribosome"/>
    <property type="evidence" value="ECO:0007669"/>
    <property type="project" value="InterPro"/>
</dbReference>
<dbReference type="GO" id="GO:0017148">
    <property type="term" value="P:negative regulation of translation"/>
    <property type="evidence" value="ECO:0007669"/>
    <property type="project" value="TreeGrafter"/>
</dbReference>
<dbReference type="GO" id="GO:0006412">
    <property type="term" value="P:translation"/>
    <property type="evidence" value="ECO:0007669"/>
    <property type="project" value="UniProtKB-UniRule"/>
</dbReference>
<dbReference type="CDD" id="cd00392">
    <property type="entry name" value="Ribosomal_L13"/>
    <property type="match status" value="1"/>
</dbReference>
<dbReference type="Gene3D" id="3.90.1180.10">
    <property type="entry name" value="Ribosomal protein L13"/>
    <property type="match status" value="1"/>
</dbReference>
<dbReference type="HAMAP" id="MF_01366">
    <property type="entry name" value="Ribosomal_uL13"/>
    <property type="match status" value="1"/>
</dbReference>
<dbReference type="InterPro" id="IPR005822">
    <property type="entry name" value="Ribosomal_uL13"/>
</dbReference>
<dbReference type="InterPro" id="IPR005823">
    <property type="entry name" value="Ribosomal_uL13_bac-type"/>
</dbReference>
<dbReference type="InterPro" id="IPR036899">
    <property type="entry name" value="Ribosomal_uL13_sf"/>
</dbReference>
<dbReference type="NCBIfam" id="TIGR01066">
    <property type="entry name" value="rplM_bact"/>
    <property type="match status" value="1"/>
</dbReference>
<dbReference type="PANTHER" id="PTHR11545:SF2">
    <property type="entry name" value="LARGE RIBOSOMAL SUBUNIT PROTEIN UL13M"/>
    <property type="match status" value="1"/>
</dbReference>
<dbReference type="PANTHER" id="PTHR11545">
    <property type="entry name" value="RIBOSOMAL PROTEIN L13"/>
    <property type="match status" value="1"/>
</dbReference>
<dbReference type="Pfam" id="PF00572">
    <property type="entry name" value="Ribosomal_L13"/>
    <property type="match status" value="1"/>
</dbReference>
<dbReference type="PIRSF" id="PIRSF002181">
    <property type="entry name" value="Ribosomal_L13"/>
    <property type="match status" value="1"/>
</dbReference>
<dbReference type="SUPFAM" id="SSF52161">
    <property type="entry name" value="Ribosomal protein L13"/>
    <property type="match status" value="1"/>
</dbReference>
<accession>B1ZUE3</accession>
<reference key="1">
    <citation type="journal article" date="2011" name="J. Bacteriol.">
        <title>Genome sequence of the verrucomicrobium Opitutus terrae PB90-1, an abundant inhabitant of rice paddy soil ecosystems.</title>
        <authorList>
            <person name="van Passel M.W."/>
            <person name="Kant R."/>
            <person name="Palva A."/>
            <person name="Copeland A."/>
            <person name="Lucas S."/>
            <person name="Lapidus A."/>
            <person name="Glavina del Rio T."/>
            <person name="Pitluck S."/>
            <person name="Goltsman E."/>
            <person name="Clum A."/>
            <person name="Sun H."/>
            <person name="Schmutz J."/>
            <person name="Larimer F.W."/>
            <person name="Land M.L."/>
            <person name="Hauser L."/>
            <person name="Kyrpides N."/>
            <person name="Mikhailova N."/>
            <person name="Richardson P.P."/>
            <person name="Janssen P.H."/>
            <person name="de Vos W.M."/>
            <person name="Smidt H."/>
        </authorList>
    </citation>
    <scope>NUCLEOTIDE SEQUENCE [LARGE SCALE GENOMIC DNA]</scope>
    <source>
        <strain>DSM 11246 / JCM 15787 / PB90-1</strain>
    </source>
</reference>
<sequence length="142" mass="15878">MKTFLAKKETVQPKWYLIDAAGVPLGRLAVKAANIIRGRHKATYTPTVDTGDYVIVINAAKVALTGKKEEQNEYMFFSGFVGGESRRKVSLMRERHPEFIIEHAVKGMLPKNRIAAKMLTKLRVFGGETHTHEANNPVKVTV</sequence>
<gene>
    <name evidence="1" type="primary">rplM</name>
    <name type="ordered locus">Oter_0697</name>
</gene>
<evidence type="ECO:0000255" key="1">
    <source>
        <dbReference type="HAMAP-Rule" id="MF_01366"/>
    </source>
</evidence>
<evidence type="ECO:0000305" key="2"/>